<gene>
    <name type="ordered locus">CPn_0808</name>
    <name type="ordered locus">CP_1063</name>
    <name type="ordered locus">CPj0808</name>
    <name type="ordered locus">CpB0837</name>
</gene>
<organism>
    <name type="scientific">Chlamydia pneumoniae</name>
    <name type="common">Chlamydophila pneumoniae</name>
    <dbReference type="NCBI Taxonomy" id="83558"/>
    <lineage>
        <taxon>Bacteria</taxon>
        <taxon>Pseudomonadati</taxon>
        <taxon>Chlamydiota</taxon>
        <taxon>Chlamydiia</taxon>
        <taxon>Chlamydiales</taxon>
        <taxon>Chlamydiaceae</taxon>
        <taxon>Chlamydia/Chlamydophila group</taxon>
        <taxon>Chlamydia</taxon>
    </lineage>
</organism>
<evidence type="ECO:0000256" key="1">
    <source>
        <dbReference type="SAM" id="MobiDB-lite"/>
    </source>
</evidence>
<evidence type="ECO:0000305" key="2"/>
<comment type="similarity">
    <text evidence="2">Belongs to the chlamydial CPn_0808/CT_579/TC_0868 family.</text>
</comment>
<protein>
    <recommendedName>
        <fullName>Protein CPn_0808/CP_1063/CPj0808/CpB0837</fullName>
    </recommendedName>
</protein>
<proteinExistence type="inferred from homology"/>
<feature type="chain" id="PRO_0000218431" description="Protein CPn_0808/CP_1063/CPj0808/CpB0837">
    <location>
        <begin position="1"/>
        <end position="444"/>
    </location>
</feature>
<feature type="region of interest" description="Disordered" evidence="1">
    <location>
        <begin position="1"/>
        <end position="124"/>
    </location>
</feature>
<feature type="compositionally biased region" description="Polar residues" evidence="1">
    <location>
        <begin position="1"/>
        <end position="13"/>
    </location>
</feature>
<feature type="compositionally biased region" description="Low complexity" evidence="1">
    <location>
        <begin position="15"/>
        <end position="24"/>
    </location>
</feature>
<feature type="compositionally biased region" description="Polar residues" evidence="1">
    <location>
        <begin position="25"/>
        <end position="42"/>
    </location>
</feature>
<feature type="compositionally biased region" description="Basic and acidic residues" evidence="1">
    <location>
        <begin position="77"/>
        <end position="86"/>
    </location>
</feature>
<feature type="compositionally biased region" description="Low complexity" evidence="1">
    <location>
        <begin position="88"/>
        <end position="103"/>
    </location>
</feature>
<feature type="compositionally biased region" description="Polar residues" evidence="1">
    <location>
        <begin position="113"/>
        <end position="124"/>
    </location>
</feature>
<name>Y808_CHLPN</name>
<sequence>MTSGVSGSSSQDPTLAAQLAQSSQKAGNAQSGHDTKNVTKQGAQAEVAAGGFEDLIQDASAQSTGKKEATSSTTKSSKGEKSEKSGKSKSSTSVASASETATAQAVQGPKGLRQNNYDSPSLPTPEAQTINGIVLKKGMGTLALLGLVMTLMANAAGESWKASFQSQNQAIRSQVESAPAIGEAIKRQANHQASATEAQAKQSLISGIVNIVGFTVSVGAGIFSAAKGATSALKSASFAKETGASAAGGAASKALTSASSSVQQTMASTAKAATTAASSAGSAATKAAANLTDDMAAAASKMASDGASKASGGLFGEVLNKPNWSEKVSRGMNVVKTQGARVASFAGNALSSSMQMSQLMHGLTAAVEGLSAGQTGIEVAHHQRLAGQAEAQAEVLKQMSSVYGQQAGQAGQLQEQAMQSFNTALQTLQNIADSQTQTTSAIFN</sequence>
<dbReference type="EMBL" id="AE001363">
    <property type="protein sequence ID" value="AAD18946.1"/>
    <property type="molecule type" value="Genomic_DNA"/>
</dbReference>
<dbReference type="EMBL" id="AE002161">
    <property type="protein sequence ID" value="AAF38836.1"/>
    <property type="molecule type" value="Genomic_DNA"/>
</dbReference>
<dbReference type="EMBL" id="BA000008">
    <property type="protein sequence ID" value="BAA99016.1"/>
    <property type="molecule type" value="Genomic_DNA"/>
</dbReference>
<dbReference type="EMBL" id="AE009440">
    <property type="protein sequence ID" value="AAP98766.1"/>
    <property type="molecule type" value="Genomic_DNA"/>
</dbReference>
<dbReference type="PIR" id="E72031">
    <property type="entry name" value="E72031"/>
</dbReference>
<dbReference type="PIR" id="F86591">
    <property type="entry name" value="F86591"/>
</dbReference>
<dbReference type="RefSeq" id="NP_225003.1">
    <property type="nucleotide sequence ID" value="NC_000922.1"/>
</dbReference>
<dbReference type="STRING" id="406984.CPK_ORF00216"/>
<dbReference type="GeneID" id="45050863"/>
<dbReference type="KEGG" id="cpa:CP_1063"/>
<dbReference type="KEGG" id="cpj:CPj0808"/>
<dbReference type="KEGG" id="cpn:CPn_0808"/>
<dbReference type="KEGG" id="cpt:CpB0837"/>
<dbReference type="PATRIC" id="fig|115713.3.peg.887"/>
<dbReference type="HOGENOM" id="CLU_628059_0_0_0"/>
<dbReference type="OrthoDB" id="19220at2"/>
<dbReference type="Proteomes" id="UP000000583">
    <property type="component" value="Chromosome"/>
</dbReference>
<dbReference type="Proteomes" id="UP000000801">
    <property type="component" value="Chromosome"/>
</dbReference>
<dbReference type="InterPro" id="IPR006972">
    <property type="entry name" value="BipB-like_C"/>
</dbReference>
<dbReference type="Pfam" id="PF04888">
    <property type="entry name" value="SseC"/>
    <property type="match status" value="1"/>
</dbReference>
<reference key="1">
    <citation type="journal article" date="1999" name="Nat. Genet.">
        <title>Comparative genomes of Chlamydia pneumoniae and C. trachomatis.</title>
        <authorList>
            <person name="Kalman S."/>
            <person name="Mitchell W.P."/>
            <person name="Marathe R."/>
            <person name="Lammel C.J."/>
            <person name="Fan J."/>
            <person name="Hyman R.W."/>
            <person name="Olinger L."/>
            <person name="Grimwood J."/>
            <person name="Davis R.W."/>
            <person name="Stephens R.S."/>
        </authorList>
    </citation>
    <scope>NUCLEOTIDE SEQUENCE [LARGE SCALE GENOMIC DNA]</scope>
    <source>
        <strain>CWL029</strain>
    </source>
</reference>
<reference key="2">
    <citation type="journal article" date="2000" name="Nucleic Acids Res.">
        <title>Genome sequences of Chlamydia trachomatis MoPn and Chlamydia pneumoniae AR39.</title>
        <authorList>
            <person name="Read T.D."/>
            <person name="Brunham R.C."/>
            <person name="Shen C."/>
            <person name="Gill S.R."/>
            <person name="Heidelberg J.F."/>
            <person name="White O."/>
            <person name="Hickey E.K."/>
            <person name="Peterson J.D."/>
            <person name="Utterback T.R."/>
            <person name="Berry K.J."/>
            <person name="Bass S."/>
            <person name="Linher K.D."/>
            <person name="Weidman J.F."/>
            <person name="Khouri H.M."/>
            <person name="Craven B."/>
            <person name="Bowman C."/>
            <person name="Dodson R.J."/>
            <person name="Gwinn M.L."/>
            <person name="Nelson W.C."/>
            <person name="DeBoy R.T."/>
            <person name="Kolonay J.F."/>
            <person name="McClarty G."/>
            <person name="Salzberg S.L."/>
            <person name="Eisen J.A."/>
            <person name="Fraser C.M."/>
        </authorList>
    </citation>
    <scope>NUCLEOTIDE SEQUENCE [LARGE SCALE GENOMIC DNA]</scope>
    <source>
        <strain>AR39</strain>
    </source>
</reference>
<reference key="3">
    <citation type="journal article" date="2000" name="Nucleic Acids Res.">
        <title>Comparison of whole genome sequences of Chlamydia pneumoniae J138 from Japan and CWL029 from USA.</title>
        <authorList>
            <person name="Shirai M."/>
            <person name="Hirakawa H."/>
            <person name="Kimoto M."/>
            <person name="Tabuchi M."/>
            <person name="Kishi F."/>
            <person name="Ouchi K."/>
            <person name="Shiba T."/>
            <person name="Ishii K."/>
            <person name="Hattori M."/>
            <person name="Kuhara S."/>
            <person name="Nakazawa T."/>
        </authorList>
    </citation>
    <scope>NUCLEOTIDE SEQUENCE [LARGE SCALE GENOMIC DNA]</scope>
    <source>
        <strain>J138</strain>
    </source>
</reference>
<reference key="4">
    <citation type="submission" date="2002-05" db="EMBL/GenBank/DDBJ databases">
        <title>The genome sequence of Chlamydia pneumoniae TW183 and comparison with other Chlamydia strains based on whole genome sequence analysis.</title>
        <authorList>
            <person name="Geng M.M."/>
            <person name="Schuhmacher A."/>
            <person name="Muehldorfer I."/>
            <person name="Bensch K.W."/>
            <person name="Schaefer K.P."/>
            <person name="Schneider S."/>
            <person name="Pohl T."/>
            <person name="Essig A."/>
            <person name="Marre R."/>
            <person name="Melchers K."/>
        </authorList>
    </citation>
    <scope>NUCLEOTIDE SEQUENCE [LARGE SCALE GENOMIC DNA]</scope>
    <source>
        <strain>TW-183</strain>
    </source>
</reference>
<accession>Q9Z798</accession>